<evidence type="ECO:0000255" key="1">
    <source>
        <dbReference type="PROSITE-ProRule" id="PRU00434"/>
    </source>
</evidence>
<evidence type="ECO:0000255" key="2">
    <source>
        <dbReference type="PROSITE-ProRule" id="PRU00441"/>
    </source>
</evidence>
<evidence type="ECO:0000305" key="3"/>
<feature type="chain" id="PRO_0000093201" description="Uncharacterized ABC transporter ATP-binding protein HI_0663">
    <location>
        <begin position="1"/>
        <end position="560"/>
    </location>
</feature>
<feature type="transmembrane region" description="Helical" evidence="2">
    <location>
        <begin position="2"/>
        <end position="22"/>
    </location>
</feature>
<feature type="transmembrane region" description="Helical" evidence="2">
    <location>
        <begin position="32"/>
        <end position="52"/>
    </location>
</feature>
<feature type="transmembrane region" description="Helical" evidence="2">
    <location>
        <begin position="108"/>
        <end position="128"/>
    </location>
</feature>
<feature type="transmembrane region" description="Helical" evidence="2">
    <location>
        <begin position="138"/>
        <end position="160"/>
    </location>
</feature>
<feature type="transmembrane region" description="Helical" evidence="2">
    <location>
        <begin position="168"/>
        <end position="188"/>
    </location>
</feature>
<feature type="transmembrane region" description="Helical" evidence="2">
    <location>
        <begin position="223"/>
        <end position="243"/>
    </location>
</feature>
<feature type="transmembrane region" description="Helical" evidence="2">
    <location>
        <begin position="249"/>
        <end position="269"/>
    </location>
</feature>
<feature type="domain" description="ABC transmembrane type-1" evidence="2">
    <location>
        <begin position="1"/>
        <end position="281"/>
    </location>
</feature>
<feature type="domain" description="ABC transporter" evidence="1">
    <location>
        <begin position="314"/>
        <end position="547"/>
    </location>
</feature>
<feature type="binding site" evidence="1">
    <location>
        <begin position="347"/>
        <end position="354"/>
    </location>
    <ligand>
        <name>ATP</name>
        <dbReference type="ChEBI" id="CHEBI:30616"/>
    </ligand>
</feature>
<accession>P71355</accession>
<name>Y663_HAEIN</name>
<organism>
    <name type="scientific">Haemophilus influenzae (strain ATCC 51907 / DSM 11121 / KW20 / Rd)</name>
    <dbReference type="NCBI Taxonomy" id="71421"/>
    <lineage>
        <taxon>Bacteria</taxon>
        <taxon>Pseudomonadati</taxon>
        <taxon>Pseudomonadota</taxon>
        <taxon>Gammaproteobacteria</taxon>
        <taxon>Pasteurellales</taxon>
        <taxon>Pasteurellaceae</taxon>
        <taxon>Haemophilus</taxon>
    </lineage>
</organism>
<reference key="1">
    <citation type="journal article" date="1995" name="Science">
        <title>Whole-genome random sequencing and assembly of Haemophilus influenzae Rd.</title>
        <authorList>
            <person name="Fleischmann R.D."/>
            <person name="Adams M.D."/>
            <person name="White O."/>
            <person name="Clayton R.A."/>
            <person name="Kirkness E.F."/>
            <person name="Kerlavage A.R."/>
            <person name="Bult C.J."/>
            <person name="Tomb J.-F."/>
            <person name="Dougherty B.A."/>
            <person name="Merrick J.M."/>
            <person name="McKenney K."/>
            <person name="Sutton G.G."/>
            <person name="FitzHugh W."/>
            <person name="Fields C.A."/>
            <person name="Gocayne J.D."/>
            <person name="Scott J.D."/>
            <person name="Shirley R."/>
            <person name="Liu L.-I."/>
            <person name="Glodek A."/>
            <person name="Kelley J.M."/>
            <person name="Weidman J.F."/>
            <person name="Phillips C.A."/>
            <person name="Spriggs T."/>
            <person name="Hedblom E."/>
            <person name="Cotton M.D."/>
            <person name="Utterback T.R."/>
            <person name="Hanna M.C."/>
            <person name="Nguyen D.T."/>
            <person name="Saudek D.M."/>
            <person name="Brandon R.C."/>
            <person name="Fine L.D."/>
            <person name="Fritchman J.L."/>
            <person name="Fuhrmann J.L."/>
            <person name="Geoghagen N.S.M."/>
            <person name="Gnehm C.L."/>
            <person name="McDonald L.A."/>
            <person name="Small K.V."/>
            <person name="Fraser C.M."/>
            <person name="Smith H.O."/>
            <person name="Venter J.C."/>
        </authorList>
    </citation>
    <scope>NUCLEOTIDE SEQUENCE [LARGE SCALE GENOMIC DNA]</scope>
    <source>
        <strain>ATCC 51907 / DSM 11121 / KW20 / Rd</strain>
    </source>
</reference>
<sequence length="560" mass="62197">MLWNWVALVGGIISAVVFSYILQAAYFHELSLLSAVILGIVLIAALALRAFAGKKSVQASYFASTKVKHELRSLIYRKLASMPLNQVNQQSTSSIIQVASEGVEQLEIYFGRYLPQLFYSLLAPLTLFAFLIFFSFKTAIILLICVPLIPMSIIAVNKIAKKLLAKYWSIYVGLGSSFLDNLQGLITLKIYQDDAYKAKAMDKEAEHFRKITMKVLTMQLNSVSLMDLLAYGGAAIGILTALLQFQNAQLSVLGVILFILLSSEFFIPLRLLGSFFHVAMNGKAASDKIFTLLDTPVETQQSAVDFEAKNNVQVEIKDLHFSYSEEKPAITGLNLSILPNQLSVFVGKSGCGKSTLVSLLMGFNKAQQGEILFNGQNALNIDRTSFYQKVSLVSHSSYVFKGTLRENMTMAKIDATDEQIYACLEQVNLAQFVRDNGGLDMQLLSRGANLSGGQIQRLALARALLHNAELYIFDEATSNIDVESEEIILQFIQQFKQQKTIVMISHRLANAVNADCINVLDQGKLIEQGTHKELMEKQGAYAEMFQQQKDLEQIREVANA</sequence>
<dbReference type="EMBL" id="L42023">
    <property type="protein sequence ID" value="AAC22320.1"/>
    <property type="molecule type" value="Genomic_DNA"/>
</dbReference>
<dbReference type="RefSeq" id="NP_438822.1">
    <property type="nucleotide sequence ID" value="NC_000907.1"/>
</dbReference>
<dbReference type="SMR" id="P71355"/>
<dbReference type="STRING" id="71421.HI_0663"/>
<dbReference type="EnsemblBacteria" id="AAC22320">
    <property type="protein sequence ID" value="AAC22320"/>
    <property type="gene ID" value="HI_0663"/>
</dbReference>
<dbReference type="KEGG" id="hin:HI_0663"/>
<dbReference type="PATRIC" id="fig|71421.8.peg.692"/>
<dbReference type="eggNOG" id="COG4988">
    <property type="taxonomic scope" value="Bacteria"/>
</dbReference>
<dbReference type="HOGENOM" id="CLU_000604_84_9_6"/>
<dbReference type="OrthoDB" id="9806127at2"/>
<dbReference type="PhylomeDB" id="P71355"/>
<dbReference type="Proteomes" id="UP000000579">
    <property type="component" value="Chromosome"/>
</dbReference>
<dbReference type="GO" id="GO:0005886">
    <property type="term" value="C:plasma membrane"/>
    <property type="evidence" value="ECO:0007669"/>
    <property type="project" value="UniProtKB-SubCell"/>
</dbReference>
<dbReference type="GO" id="GO:0015421">
    <property type="term" value="F:ABC-type oligopeptide transporter activity"/>
    <property type="evidence" value="ECO:0000318"/>
    <property type="project" value="GO_Central"/>
</dbReference>
<dbReference type="GO" id="GO:0005524">
    <property type="term" value="F:ATP binding"/>
    <property type="evidence" value="ECO:0007669"/>
    <property type="project" value="UniProtKB-KW"/>
</dbReference>
<dbReference type="GO" id="GO:0016887">
    <property type="term" value="F:ATP hydrolysis activity"/>
    <property type="evidence" value="ECO:0007669"/>
    <property type="project" value="InterPro"/>
</dbReference>
<dbReference type="CDD" id="cd18781">
    <property type="entry name" value="ABC_6TM_AarD_CydDC_like"/>
    <property type="match status" value="1"/>
</dbReference>
<dbReference type="FunFam" id="3.40.50.300:FF:000854">
    <property type="entry name" value="Multidrug ABC transporter ATP-binding protein"/>
    <property type="match status" value="1"/>
</dbReference>
<dbReference type="Gene3D" id="1.20.1560.10">
    <property type="entry name" value="ABC transporter type 1, transmembrane domain"/>
    <property type="match status" value="1"/>
</dbReference>
<dbReference type="Gene3D" id="3.40.50.300">
    <property type="entry name" value="P-loop containing nucleotide triphosphate hydrolases"/>
    <property type="match status" value="1"/>
</dbReference>
<dbReference type="InterPro" id="IPR003593">
    <property type="entry name" value="AAA+_ATPase"/>
</dbReference>
<dbReference type="InterPro" id="IPR011527">
    <property type="entry name" value="ABC1_TM_dom"/>
</dbReference>
<dbReference type="InterPro" id="IPR036640">
    <property type="entry name" value="ABC1_TM_sf"/>
</dbReference>
<dbReference type="InterPro" id="IPR003439">
    <property type="entry name" value="ABC_transporter-like_ATP-bd"/>
</dbReference>
<dbReference type="InterPro" id="IPR017871">
    <property type="entry name" value="ABC_transporter-like_CS"/>
</dbReference>
<dbReference type="InterPro" id="IPR027417">
    <property type="entry name" value="P-loop_NTPase"/>
</dbReference>
<dbReference type="InterPro" id="IPR039421">
    <property type="entry name" value="Type_1_exporter"/>
</dbReference>
<dbReference type="PANTHER" id="PTHR24221">
    <property type="entry name" value="ATP-BINDING CASSETTE SUB-FAMILY B"/>
    <property type="match status" value="1"/>
</dbReference>
<dbReference type="PANTHER" id="PTHR24221:SF654">
    <property type="entry name" value="ATP-BINDING CASSETTE SUB-FAMILY B MEMBER 6"/>
    <property type="match status" value="1"/>
</dbReference>
<dbReference type="Pfam" id="PF00664">
    <property type="entry name" value="ABC_membrane"/>
    <property type="match status" value="1"/>
</dbReference>
<dbReference type="Pfam" id="PF00005">
    <property type="entry name" value="ABC_tran"/>
    <property type="match status" value="1"/>
</dbReference>
<dbReference type="SMART" id="SM00382">
    <property type="entry name" value="AAA"/>
    <property type="match status" value="1"/>
</dbReference>
<dbReference type="SUPFAM" id="SSF90123">
    <property type="entry name" value="ABC transporter transmembrane region"/>
    <property type="match status" value="1"/>
</dbReference>
<dbReference type="SUPFAM" id="SSF52540">
    <property type="entry name" value="P-loop containing nucleoside triphosphate hydrolases"/>
    <property type="match status" value="1"/>
</dbReference>
<dbReference type="PROSITE" id="PS50929">
    <property type="entry name" value="ABC_TM1F"/>
    <property type="match status" value="1"/>
</dbReference>
<dbReference type="PROSITE" id="PS00211">
    <property type="entry name" value="ABC_TRANSPORTER_1"/>
    <property type="match status" value="1"/>
</dbReference>
<dbReference type="PROSITE" id="PS50893">
    <property type="entry name" value="ABC_TRANSPORTER_2"/>
    <property type="match status" value="1"/>
</dbReference>
<gene>
    <name type="ordered locus">HI_0663</name>
</gene>
<proteinExistence type="inferred from homology"/>
<comment type="subcellular location">
    <subcellularLocation>
        <location evidence="3">Cell inner membrane</location>
        <topology evidence="2">Multi-pass membrane protein</topology>
    </subcellularLocation>
</comment>
<comment type="similarity">
    <text evidence="3">Belongs to the ABC transporter superfamily.</text>
</comment>
<keyword id="KW-0067">ATP-binding</keyword>
<keyword id="KW-0997">Cell inner membrane</keyword>
<keyword id="KW-1003">Cell membrane</keyword>
<keyword id="KW-0472">Membrane</keyword>
<keyword id="KW-0547">Nucleotide-binding</keyword>
<keyword id="KW-1185">Reference proteome</keyword>
<keyword id="KW-0812">Transmembrane</keyword>
<keyword id="KW-1133">Transmembrane helix</keyword>
<keyword id="KW-0813">Transport</keyword>
<protein>
    <recommendedName>
        <fullName>Uncharacterized ABC transporter ATP-binding protein HI_0663</fullName>
    </recommendedName>
</protein>